<name>SPC34_SCHPO</name>
<organism>
    <name type="scientific">Schizosaccharomyces pombe (strain 972 / ATCC 24843)</name>
    <name type="common">Fission yeast</name>
    <dbReference type="NCBI Taxonomy" id="284812"/>
    <lineage>
        <taxon>Eukaryota</taxon>
        <taxon>Fungi</taxon>
        <taxon>Dikarya</taxon>
        <taxon>Ascomycota</taxon>
        <taxon>Taphrinomycotina</taxon>
        <taxon>Schizosaccharomycetes</taxon>
        <taxon>Schizosaccharomycetales</taxon>
        <taxon>Schizosaccharomycetaceae</taxon>
        <taxon>Schizosaccharomyces</taxon>
    </lineage>
</organism>
<keyword id="KW-0131">Cell cycle</keyword>
<keyword id="KW-0132">Cell division</keyword>
<keyword id="KW-0137">Centromere</keyword>
<keyword id="KW-0158">Chromosome</keyword>
<keyword id="KW-0159">Chromosome partition</keyword>
<keyword id="KW-0175">Coiled coil</keyword>
<keyword id="KW-0963">Cytoplasm</keyword>
<keyword id="KW-0206">Cytoskeleton</keyword>
<keyword id="KW-0995">Kinetochore</keyword>
<keyword id="KW-0493">Microtubule</keyword>
<keyword id="KW-0498">Mitosis</keyword>
<keyword id="KW-0539">Nucleus</keyword>
<keyword id="KW-1185">Reference proteome</keyword>
<sequence length="164" mass="19011">MSDLLNYLQSIAATSEKLLEPENPNAARFTDAVLHTHAITDLIRDTQKEELIAAEFKSLPKDWSERLASENPADYVACIEELLDIYPMQGGREYLETLVEKYNLHMSGIENLENVLLEQKEQLQQLEKRQTDQVSARENILQRETSEIQRLEREIEKVKQLIQS</sequence>
<reference key="1">
    <citation type="journal article" date="2002" name="Nature">
        <title>The genome sequence of Schizosaccharomyces pombe.</title>
        <authorList>
            <person name="Wood V."/>
            <person name="Gwilliam R."/>
            <person name="Rajandream M.A."/>
            <person name="Lyne M.H."/>
            <person name="Lyne R."/>
            <person name="Stewart A."/>
            <person name="Sgouros J.G."/>
            <person name="Peat N."/>
            <person name="Hayles J."/>
            <person name="Baker S.G."/>
            <person name="Basham D."/>
            <person name="Bowman S."/>
            <person name="Brooks K."/>
            <person name="Brown D."/>
            <person name="Brown S."/>
            <person name="Chillingworth T."/>
            <person name="Churcher C.M."/>
            <person name="Collins M."/>
            <person name="Connor R."/>
            <person name="Cronin A."/>
            <person name="Davis P."/>
            <person name="Feltwell T."/>
            <person name="Fraser A."/>
            <person name="Gentles S."/>
            <person name="Goble A."/>
            <person name="Hamlin N."/>
            <person name="Harris D.E."/>
            <person name="Hidalgo J."/>
            <person name="Hodgson G."/>
            <person name="Holroyd S."/>
            <person name="Hornsby T."/>
            <person name="Howarth S."/>
            <person name="Huckle E.J."/>
            <person name="Hunt S."/>
            <person name="Jagels K."/>
            <person name="James K.D."/>
            <person name="Jones L."/>
            <person name="Jones M."/>
            <person name="Leather S."/>
            <person name="McDonald S."/>
            <person name="McLean J."/>
            <person name="Mooney P."/>
            <person name="Moule S."/>
            <person name="Mungall K.L."/>
            <person name="Murphy L.D."/>
            <person name="Niblett D."/>
            <person name="Odell C."/>
            <person name="Oliver K."/>
            <person name="O'Neil S."/>
            <person name="Pearson D."/>
            <person name="Quail M.A."/>
            <person name="Rabbinowitsch E."/>
            <person name="Rutherford K.M."/>
            <person name="Rutter S."/>
            <person name="Saunders D."/>
            <person name="Seeger K."/>
            <person name="Sharp S."/>
            <person name="Skelton J."/>
            <person name="Simmonds M.N."/>
            <person name="Squares R."/>
            <person name="Squares S."/>
            <person name="Stevens K."/>
            <person name="Taylor K."/>
            <person name="Taylor R.G."/>
            <person name="Tivey A."/>
            <person name="Walsh S.V."/>
            <person name="Warren T."/>
            <person name="Whitehead S."/>
            <person name="Woodward J.R."/>
            <person name="Volckaert G."/>
            <person name="Aert R."/>
            <person name="Robben J."/>
            <person name="Grymonprez B."/>
            <person name="Weltjens I."/>
            <person name="Vanstreels E."/>
            <person name="Rieger M."/>
            <person name="Schaefer M."/>
            <person name="Mueller-Auer S."/>
            <person name="Gabel C."/>
            <person name="Fuchs M."/>
            <person name="Duesterhoeft A."/>
            <person name="Fritzc C."/>
            <person name="Holzer E."/>
            <person name="Moestl D."/>
            <person name="Hilbert H."/>
            <person name="Borzym K."/>
            <person name="Langer I."/>
            <person name="Beck A."/>
            <person name="Lehrach H."/>
            <person name="Reinhardt R."/>
            <person name="Pohl T.M."/>
            <person name="Eger P."/>
            <person name="Zimmermann W."/>
            <person name="Wedler H."/>
            <person name="Wambutt R."/>
            <person name="Purnelle B."/>
            <person name="Goffeau A."/>
            <person name="Cadieu E."/>
            <person name="Dreano S."/>
            <person name="Gloux S."/>
            <person name="Lelaure V."/>
            <person name="Mottier S."/>
            <person name="Galibert F."/>
            <person name="Aves S.J."/>
            <person name="Xiang Z."/>
            <person name="Hunt C."/>
            <person name="Moore K."/>
            <person name="Hurst S.M."/>
            <person name="Lucas M."/>
            <person name="Rochet M."/>
            <person name="Gaillardin C."/>
            <person name="Tallada V.A."/>
            <person name="Garzon A."/>
            <person name="Thode G."/>
            <person name="Daga R.R."/>
            <person name="Cruzado L."/>
            <person name="Jimenez J."/>
            <person name="Sanchez M."/>
            <person name="del Rey F."/>
            <person name="Benito J."/>
            <person name="Dominguez A."/>
            <person name="Revuelta J.L."/>
            <person name="Moreno S."/>
            <person name="Armstrong J."/>
            <person name="Forsburg S.L."/>
            <person name="Cerutti L."/>
            <person name="Lowe T."/>
            <person name="McCombie W.R."/>
            <person name="Paulsen I."/>
            <person name="Potashkin J."/>
            <person name="Shpakovski G.V."/>
            <person name="Ussery D."/>
            <person name="Barrell B.G."/>
            <person name="Nurse P."/>
        </authorList>
    </citation>
    <scope>NUCLEOTIDE SEQUENCE [LARGE SCALE GENOMIC DNA]</scope>
    <source>
        <strain>972 / ATCC 24843</strain>
    </source>
</reference>
<reference key="2">
    <citation type="journal article" date="2005" name="EMBO J.">
        <title>Molecular analysis of kinetochore architecture in fission yeast.</title>
        <authorList>
            <person name="Liu X."/>
            <person name="McLeod I."/>
            <person name="Anderson S."/>
            <person name="Yates J.R. III"/>
            <person name="He X."/>
        </authorList>
    </citation>
    <scope>FUNCTION</scope>
    <scope>IDENTIFICATION IN THE DASH COMPLEX</scope>
    <scope>SUBCELLULAR LOCATION</scope>
</reference>
<reference key="3">
    <citation type="journal article" date="2005" name="EMBO J.">
        <title>The DASH complex and Klp5/Klp6 kinesin coordinate bipolar chromosome attachment in fission yeast.</title>
        <authorList>
            <person name="Sanchez-Perez I."/>
            <person name="Renwick S.J."/>
            <person name="Crawley K."/>
            <person name="Karig I."/>
            <person name="Buck V."/>
            <person name="Meadows J.C."/>
            <person name="Franco-Sanchez A."/>
            <person name="Fleig U."/>
            <person name="Toda T."/>
            <person name="Millar J.B."/>
        </authorList>
    </citation>
    <scope>FUNCTION</scope>
    <scope>DISRUPTION PHENOTYPE</scope>
</reference>
<reference key="4">
    <citation type="journal article" date="2008" name="Mol. Biol. Cell">
        <title>Sister kinetochore recapture in fission yeast occurs by two distinct mechanisms, both requiring Dam1 and Klp2.</title>
        <authorList>
            <person name="Gachet Y."/>
            <person name="Reyes C."/>
            <person name="Courtheoux T."/>
            <person name="Goldstone S."/>
            <person name="Gay G."/>
            <person name="Serrurier C."/>
            <person name="Tournier S."/>
        </authorList>
    </citation>
    <scope>FUNCTION</scope>
</reference>
<reference key="5">
    <citation type="journal article" date="2010" name="Proc. Natl. Acad. Sci. U.S.A.">
        <title>A non-ring-like form of the Dam1 complex modulates microtubule dynamics in fission yeast.</title>
        <authorList>
            <person name="Gao Q."/>
            <person name="Courtheoux T."/>
            <person name="Gachet Y."/>
            <person name="Tournier S."/>
            <person name="He X."/>
        </authorList>
    </citation>
    <scope>FUNCTION</scope>
    <scope>SUBUNIT</scope>
    <scope>SUBCELLULAR LOCATION</scope>
</reference>
<accession>O14285</accession>
<gene>
    <name type="primary">spc34</name>
    <name type="ORF">SPAC8C9.17c</name>
</gene>
<evidence type="ECO:0000250" key="1">
    <source>
        <dbReference type="UniProtKB" id="P36131"/>
    </source>
</evidence>
<evidence type="ECO:0000255" key="2"/>
<evidence type="ECO:0000269" key="3">
    <source>
    </source>
</evidence>
<evidence type="ECO:0000269" key="4">
    <source>
    </source>
</evidence>
<evidence type="ECO:0000269" key="5">
    <source>
    </source>
</evidence>
<evidence type="ECO:0000269" key="6">
    <source>
    </source>
</evidence>
<evidence type="ECO:0000305" key="7"/>
<evidence type="ECO:0000305" key="8">
    <source>
    </source>
</evidence>
<proteinExistence type="evidence at protein level"/>
<feature type="chain" id="PRO_0000211553" description="DASH complex subunit spc34">
    <location>
        <begin position="1"/>
        <end position="164"/>
    </location>
</feature>
<feature type="coiled-coil region" evidence="2">
    <location>
        <begin position="104"/>
        <end position="164"/>
    </location>
</feature>
<comment type="function">
    <text evidence="3 4 5 6">Component of the DASH complex that connects microtubules with kinetochores and couples microtubule depolymerisation to chromosome movement; it is involved in retrieving kinetochores to the spindle poles before their re-orientation on the spindle in early mitosis and allows microtubule depolymerization to pull chromosomes apart and resist detachment during anaphase (PubMed:16079914, PubMed:20624975). Kinetochores, consisting of a centromere-associated inner segment and a microtubule-contacting outer segment, play a crucial role in chromosome segregation by mediating the physical connection between centromeric DNA and microtubules (PubMed:16079914, PubMed:20624975). Kinetochores also serve as an input point for the spindle assembly checkpoint, which delays anaphase until all chromosomes have bioriented on the mitotic spindle (PubMed:16079915). The DASH complex mediates bipolar kinetochore-microtubule attachments and facilitates the formation of additional interactions between outer kinetochore components and spindle microtubules (PubMed:16079914). During chromosome movement along the microtubule, it is required both for the sliding of kinetochores along the lateral side of the microtubule and also for microtubule end-on pulling on the kinetochore (PubMed:18256284). Modulates cytoplasmic microtubule dynamics by tracking the plus-end of shortening microtubules and slowing their depolymerization (PubMed:20624975).</text>
</comment>
<comment type="subunit">
    <text evidence="1 3 6">Component of the DASH complex consisting of ask1, dad1, dad2, dad3, dad4, dam1, duo1, dad5, spc19 and spc34, with a stoichiometry of one copy of each subunit per complex (PubMed:16079914). Multiple DASH complexes oligomerize to form a ring that encircles spindle microtubules and organizes the rod-like NDC80 complexes of the outer kinetochore (By similarity). DASH complex oligomerization strengthens microtubule attachments (By similarity). On cytoplasmic microtubules, DASH complexes appear to form patches instead of rings (PubMed:20624975).</text>
</comment>
<comment type="subcellular location">
    <subcellularLocation>
        <location evidence="3">Nucleus</location>
    </subcellularLocation>
    <subcellularLocation>
        <location evidence="3">Cytoplasm</location>
        <location evidence="3">Cytoskeleton</location>
        <location evidence="3">Spindle</location>
    </subcellularLocation>
    <subcellularLocation>
        <location evidence="3">Chromosome</location>
        <location evidence="3">Centromere</location>
        <location evidence="3">Kinetochore</location>
    </subcellularLocation>
    <subcellularLocation>
        <location evidence="8">Cytoplasm</location>
        <location evidence="8">Cytoskeleton</location>
    </subcellularLocation>
    <text evidence="3 8">Associates with the mitotic spindle and the kinetochore. Kinetochore association occurs only during mitosis (PubMed:16079914). In the cytoskeleton, localizes to cortical microtubules (Probable).</text>
</comment>
<comment type="disruption phenotype">
    <text evidence="4">Sensitive to thiabendazole and osmotic stress.</text>
</comment>
<comment type="similarity">
    <text evidence="7">Belongs to the DASH complex SPC34 family.</text>
</comment>
<protein>
    <recommendedName>
        <fullName>DASH complex subunit spc34</fullName>
    </recommendedName>
    <alternativeName>
        <fullName>Outer kinetochore protein spc34</fullName>
    </alternativeName>
</protein>
<dbReference type="EMBL" id="CU329670">
    <property type="protein sequence ID" value="CAB16304.1"/>
    <property type="molecule type" value="Genomic_DNA"/>
</dbReference>
<dbReference type="PIR" id="T39153">
    <property type="entry name" value="T39153"/>
</dbReference>
<dbReference type="RefSeq" id="NP_594287.1">
    <property type="nucleotide sequence ID" value="NM_001019710.2"/>
</dbReference>
<dbReference type="SMR" id="O14285"/>
<dbReference type="BioGRID" id="278578">
    <property type="interactions" value="188"/>
</dbReference>
<dbReference type="ComplexPortal" id="CPX-10081">
    <property type="entry name" value="DASH complex"/>
</dbReference>
<dbReference type="IntAct" id="O14285">
    <property type="interactions" value="1"/>
</dbReference>
<dbReference type="STRING" id="284812.O14285"/>
<dbReference type="PaxDb" id="4896-SPAC8C9.17c.1"/>
<dbReference type="EnsemblFungi" id="SPAC8C9.17c.1">
    <property type="protein sequence ID" value="SPAC8C9.17c.1:pep"/>
    <property type="gene ID" value="SPAC8C9.17c"/>
</dbReference>
<dbReference type="GeneID" id="2542102"/>
<dbReference type="KEGG" id="spo:2542102"/>
<dbReference type="PomBase" id="SPAC8C9.17c">
    <property type="gene designation" value="spc34"/>
</dbReference>
<dbReference type="VEuPathDB" id="FungiDB:SPAC8C9.17c"/>
<dbReference type="HOGENOM" id="CLU_1620021_0_0_1"/>
<dbReference type="InParanoid" id="O14285"/>
<dbReference type="OMA" id="VEKYNTH"/>
<dbReference type="PRO" id="PR:O14285"/>
<dbReference type="Proteomes" id="UP000002485">
    <property type="component" value="Chromosome I"/>
</dbReference>
<dbReference type="GO" id="GO:0000779">
    <property type="term" value="C:condensed chromosome, centromeric region"/>
    <property type="evidence" value="ECO:0000314"/>
    <property type="project" value="PomBase"/>
</dbReference>
<dbReference type="GO" id="GO:0005829">
    <property type="term" value="C:cytosol"/>
    <property type="evidence" value="ECO:0007005"/>
    <property type="project" value="PomBase"/>
</dbReference>
<dbReference type="GO" id="GO:0042729">
    <property type="term" value="C:DASH complex"/>
    <property type="evidence" value="ECO:0000314"/>
    <property type="project" value="PomBase"/>
</dbReference>
<dbReference type="GO" id="GO:0000776">
    <property type="term" value="C:kinetochore"/>
    <property type="evidence" value="ECO:0000314"/>
    <property type="project" value="PomBase"/>
</dbReference>
<dbReference type="GO" id="GO:0072686">
    <property type="term" value="C:mitotic spindle"/>
    <property type="evidence" value="ECO:0007005"/>
    <property type="project" value="PomBase"/>
</dbReference>
<dbReference type="GO" id="GO:0044732">
    <property type="term" value="C:mitotic spindle pole body"/>
    <property type="evidence" value="ECO:0000314"/>
    <property type="project" value="PomBase"/>
</dbReference>
<dbReference type="GO" id="GO:0005634">
    <property type="term" value="C:nucleus"/>
    <property type="evidence" value="ECO:0007005"/>
    <property type="project" value="PomBase"/>
</dbReference>
<dbReference type="GO" id="GO:0005876">
    <property type="term" value="C:spindle microtubule"/>
    <property type="evidence" value="ECO:0007669"/>
    <property type="project" value="InterPro"/>
</dbReference>
<dbReference type="GO" id="GO:0008608">
    <property type="term" value="P:attachment of spindle microtubules to kinetochore"/>
    <property type="evidence" value="ECO:0000250"/>
    <property type="project" value="UniProtKB"/>
</dbReference>
<dbReference type="GO" id="GO:0051301">
    <property type="term" value="P:cell division"/>
    <property type="evidence" value="ECO:0007669"/>
    <property type="project" value="UniProtKB-KW"/>
</dbReference>
<dbReference type="GO" id="GO:1990758">
    <property type="term" value="P:mitotic sister chromatid biorientation"/>
    <property type="evidence" value="ECO:0000269"/>
    <property type="project" value="UniProtKB"/>
</dbReference>
<dbReference type="GO" id="GO:1990976">
    <property type="term" value="P:protein transport along microtubule to mitotic spindle pole body"/>
    <property type="evidence" value="ECO:0000250"/>
    <property type="project" value="UniProtKB"/>
</dbReference>
<dbReference type="GO" id="GO:0051455">
    <property type="term" value="P:spindle attachment to meiosis I kinetochore"/>
    <property type="evidence" value="ECO:0000305"/>
    <property type="project" value="PomBase"/>
</dbReference>
<dbReference type="InterPro" id="IPR013966">
    <property type="entry name" value="Spc34"/>
</dbReference>
<dbReference type="Pfam" id="PF08657">
    <property type="entry name" value="DASH_Spc34"/>
    <property type="match status" value="1"/>
</dbReference>